<evidence type="ECO:0000255" key="1">
    <source>
        <dbReference type="HAMAP-Rule" id="MF_01507"/>
    </source>
</evidence>
<gene>
    <name type="ordered locus">CPE1779</name>
</gene>
<organism>
    <name type="scientific">Clostridium perfringens (strain 13 / Type A)</name>
    <dbReference type="NCBI Taxonomy" id="195102"/>
    <lineage>
        <taxon>Bacteria</taxon>
        <taxon>Bacillati</taxon>
        <taxon>Bacillota</taxon>
        <taxon>Clostridia</taxon>
        <taxon>Eubacteriales</taxon>
        <taxon>Clostridiaceae</taxon>
        <taxon>Clostridium</taxon>
    </lineage>
</organism>
<sequence>MSNNFDHTMQFDFSKNKEDLTKSILTDVYNSLKEKGYNPVNQLVGYLISGDPTYITNYNGARALVRKLERDEILEEVIKSYLEIK</sequence>
<comment type="similarity">
    <text evidence="1">Belongs to the UPF0297 family.</text>
</comment>
<protein>
    <recommendedName>
        <fullName evidence="1">UPF0297 protein CPE1779</fullName>
    </recommendedName>
</protein>
<feature type="chain" id="PRO_0000216966" description="UPF0297 protein CPE1779">
    <location>
        <begin position="1"/>
        <end position="85"/>
    </location>
</feature>
<reference key="1">
    <citation type="journal article" date="2002" name="Proc. Natl. Acad. Sci. U.S.A.">
        <title>Complete genome sequence of Clostridium perfringens, an anaerobic flesh-eater.</title>
        <authorList>
            <person name="Shimizu T."/>
            <person name="Ohtani K."/>
            <person name="Hirakawa H."/>
            <person name="Ohshima K."/>
            <person name="Yamashita A."/>
            <person name="Shiba T."/>
            <person name="Ogasawara N."/>
            <person name="Hattori M."/>
            <person name="Kuhara S."/>
            <person name="Hayashi H."/>
        </authorList>
    </citation>
    <scope>NUCLEOTIDE SEQUENCE [LARGE SCALE GENOMIC DNA]</scope>
    <source>
        <strain>13 / Type A</strain>
    </source>
</reference>
<keyword id="KW-1185">Reference proteome</keyword>
<proteinExistence type="inferred from homology"/>
<dbReference type="EMBL" id="BA000016">
    <property type="protein sequence ID" value="BAB81485.1"/>
    <property type="molecule type" value="Genomic_DNA"/>
</dbReference>
<dbReference type="RefSeq" id="WP_003451703.1">
    <property type="nucleotide sequence ID" value="NC_003366.1"/>
</dbReference>
<dbReference type="SMR" id="Q8XJH7"/>
<dbReference type="STRING" id="195102.gene:10491043"/>
<dbReference type="KEGG" id="cpe:CPE1779"/>
<dbReference type="HOGENOM" id="CLU_162466_0_0_9"/>
<dbReference type="Proteomes" id="UP000000818">
    <property type="component" value="Chromosome"/>
</dbReference>
<dbReference type="HAMAP" id="MF_01507">
    <property type="entry name" value="UPF0297"/>
    <property type="match status" value="1"/>
</dbReference>
<dbReference type="InterPro" id="IPR009309">
    <property type="entry name" value="IreB"/>
</dbReference>
<dbReference type="NCBIfam" id="NF003997">
    <property type="entry name" value="PRK05473.1"/>
    <property type="match status" value="1"/>
</dbReference>
<dbReference type="PANTHER" id="PTHR40067">
    <property type="entry name" value="UPF0297 PROTEIN YRZL"/>
    <property type="match status" value="1"/>
</dbReference>
<dbReference type="PANTHER" id="PTHR40067:SF1">
    <property type="entry name" value="UPF0297 PROTEIN YRZL"/>
    <property type="match status" value="1"/>
</dbReference>
<dbReference type="Pfam" id="PF06135">
    <property type="entry name" value="IreB"/>
    <property type="match status" value="1"/>
</dbReference>
<dbReference type="PIRSF" id="PIRSF037258">
    <property type="entry name" value="DUF965_bac"/>
    <property type="match status" value="1"/>
</dbReference>
<name>Y1779_CLOPE</name>
<accession>Q8XJH7</accession>